<keyword id="KW-0051">Antiviral defense</keyword>
<keyword id="KW-0255">Endonuclease</keyword>
<keyword id="KW-0378">Hydrolase</keyword>
<keyword id="KW-0540">Nuclease</keyword>
<keyword id="KW-1185">Reference proteome</keyword>
<keyword id="KW-0694">RNA-binding</keyword>
<name>CAS6_PECAS</name>
<organism>
    <name type="scientific">Pectobacterium atrosepticum (strain SCRI 1043 / ATCC BAA-672)</name>
    <name type="common">Erwinia carotovora subsp. atroseptica</name>
    <dbReference type="NCBI Taxonomy" id="218491"/>
    <lineage>
        <taxon>Bacteria</taxon>
        <taxon>Pseudomonadati</taxon>
        <taxon>Pseudomonadota</taxon>
        <taxon>Gammaproteobacteria</taxon>
        <taxon>Enterobacterales</taxon>
        <taxon>Pectobacteriaceae</taxon>
        <taxon>Pectobacterium</taxon>
    </lineage>
</organism>
<protein>
    <recommendedName>
        <fullName>CRISPR-associated endonuclease Cas6f/Csy4</fullName>
        <ecNumber>3.1.-.-</ecNumber>
    </recommendedName>
    <alternativeName>
        <fullName>crRNA endonuclease</fullName>
    </alternativeName>
</protein>
<feature type="chain" id="PRO_0000430242" description="CRISPR-associated endonuclease Cas6f/Csy4">
    <location>
        <begin position="1"/>
        <end position="184"/>
    </location>
</feature>
<comment type="function">
    <text evidence="1 3">CRISPR (clustered regularly interspaced short palindromic repeat) is an adaptive immune system that provides protection against mobile genetic elements (viruses, transposable elements and conjugative plasmids). CRISPR clusters contain sequences complementary to antecedent mobile elements and target invading nucleic acids. CRISPR clusters are transcribed and processed into CRISPR RNA (crRNA). Processes pre-crRNA into individual crRNA units.</text>
</comment>
<comment type="subunit">
    <text evidence="1 2">Homodimer. Part of the probable Csy ribonucleoprotein complex with cys1, cys2, csy3, cas6f and crRNA.</text>
</comment>
<comment type="induction">
    <text evidence="1">Expressed in late exponential phase (other phases not tested); part of a large cas-CRISPR3 polycistronic operon.</text>
</comment>
<comment type="disruption phenotype">
    <text evidence="1 3">Loss of crRNA processing (PubMed:21519197), no chromosomal targeting (PubMed:23637624).</text>
</comment>
<comment type="biotechnology">
    <text evidence="3">If the spacer DNA has a perfect match in the chromosome then toxicity results. Suppression of the toxic effects occurs via mutations in the CRISPR/Cas machinery, or via target deletion, which might contribute to genome plasticity. This CRISPR/Cas system can be used to remove genomic islands, and possibly other genomic regions.</text>
</comment>
<comment type="similarity">
    <text evidence="4">Belongs to the CRISPR-associated endoribonuclease Cas6 family. Cas6f/Csy4, subtype I-F/Ypest subfamily.</text>
</comment>
<evidence type="ECO:0000269" key="1">
    <source>
    </source>
</evidence>
<evidence type="ECO:0000269" key="2">
    <source>
    </source>
</evidence>
<evidence type="ECO:0000269" key="3">
    <source>
    </source>
</evidence>
<evidence type="ECO:0000305" key="4"/>
<accession>Q6D0W5</accession>
<reference key="1">
    <citation type="journal article" date="2004" name="Proc. Natl. Acad. Sci. U.S.A.">
        <title>Genome sequence of the enterobacterial phytopathogen Erwinia carotovora subsp. atroseptica and characterization of virulence factors.</title>
        <authorList>
            <person name="Bell K.S."/>
            <person name="Sebaihia M."/>
            <person name="Pritchard L."/>
            <person name="Holden M.T.G."/>
            <person name="Hyman L.J."/>
            <person name="Holeva M.C."/>
            <person name="Thomson N.R."/>
            <person name="Bentley S.D."/>
            <person name="Churcher L.J.C."/>
            <person name="Mungall K."/>
            <person name="Atkin R."/>
            <person name="Bason N."/>
            <person name="Brooks K."/>
            <person name="Chillingworth T."/>
            <person name="Clark K."/>
            <person name="Doggett J."/>
            <person name="Fraser A."/>
            <person name="Hance Z."/>
            <person name="Hauser H."/>
            <person name="Jagels K."/>
            <person name="Moule S."/>
            <person name="Norbertczak H."/>
            <person name="Ormond D."/>
            <person name="Price C."/>
            <person name="Quail M.A."/>
            <person name="Sanders M."/>
            <person name="Walker D."/>
            <person name="Whitehead S."/>
            <person name="Salmond G.P.C."/>
            <person name="Birch P.R.J."/>
            <person name="Parkhill J."/>
            <person name="Toth I.K."/>
        </authorList>
    </citation>
    <scope>NUCLEOTIDE SEQUENCE [LARGE SCALE GENOMIC DNA]</scope>
    <source>
        <strain>SCRI 1043 / ATCC BAA-672</strain>
    </source>
</reference>
<reference key="2">
    <citation type="journal article" date="2011" name="RNA Biol.">
        <title>Csy4 is responsible for CRISPR RNA processing in Pectobacterium atrosepticum.</title>
        <authorList>
            <person name="Przybilski R."/>
            <person name="Richter C."/>
            <person name="Gristwood T."/>
            <person name="Clulow J.S."/>
            <person name="Vercoe R.B."/>
            <person name="Fineran P.C."/>
        </authorList>
    </citation>
    <scope>FUNCTION IN CRRNA FORMATION</scope>
    <scope>SUBUNIT</scope>
    <scope>INDUCTION</scope>
    <scope>OPERON STRUCTURE</scope>
    <scope>DISRUPTION PHENOTYPE</scope>
    <source>
        <strain>SCRI 1043 / ATCC BAA-672</strain>
    </source>
</reference>
<reference key="3">
    <citation type="journal article" date="2012" name="PLoS ONE">
        <title>In vivo protein interactions and complex formation in the Pectobacterium atrosepticum subtype I-F CRISPR/Cas System.</title>
        <authorList>
            <person name="Richter C."/>
            <person name="Gristwood T."/>
            <person name="Clulow J.S."/>
            <person name="Fineran P.C."/>
        </authorList>
    </citation>
    <scope>IDENTIFICATION BY MASS SPECTROMETRY</scope>
    <scope>SUBUNIT</scope>
    <source>
        <strain>SCRI 1043 / ATCC BAA-672</strain>
    </source>
</reference>
<reference key="4">
    <citation type="journal article" date="2013" name="PLoS Genet.">
        <title>Cytotoxic chromosomal targeting by CRISPR/Cas systems can reshape bacterial genomes and expel or remodel pathogenicity islands.</title>
        <authorList>
            <person name="Vercoe R.B."/>
            <person name="Chang J.T."/>
            <person name="Dy R.L."/>
            <person name="Taylor C."/>
            <person name="Gristwood T."/>
            <person name="Clulow J.S."/>
            <person name="Richter C."/>
            <person name="Przybilski R."/>
            <person name="Pitman A.R."/>
            <person name="Fineran P.C."/>
        </authorList>
    </citation>
    <scope>FUNCTION IN CRRNA FORMATION</scope>
    <scope>BIOTECHNOLOGY</scope>
    <scope>DISRUPTION PHENOTYPE</scope>
    <source>
        <strain>SCRI 1043 / ATCC BAA-672</strain>
    </source>
</reference>
<dbReference type="EC" id="3.1.-.-"/>
<dbReference type="EMBL" id="BX950851">
    <property type="protein sequence ID" value="CAG76582.1"/>
    <property type="molecule type" value="Genomic_DNA"/>
</dbReference>
<dbReference type="RefSeq" id="WP_011095184.1">
    <property type="nucleotide sequence ID" value="NC_004547.2"/>
</dbReference>
<dbReference type="SMR" id="Q6D0W5"/>
<dbReference type="STRING" id="218491.ECA3684"/>
<dbReference type="KEGG" id="eca:ECA3684"/>
<dbReference type="PATRIC" id="fig|218491.5.peg.3736"/>
<dbReference type="eggNOG" id="ENOG5032RVU">
    <property type="taxonomic scope" value="Bacteria"/>
</dbReference>
<dbReference type="HOGENOM" id="CLU_108958_0_0_6"/>
<dbReference type="OrthoDB" id="259831at2"/>
<dbReference type="Proteomes" id="UP000007966">
    <property type="component" value="Chromosome"/>
</dbReference>
<dbReference type="GO" id="GO:0004519">
    <property type="term" value="F:endonuclease activity"/>
    <property type="evidence" value="ECO:0007669"/>
    <property type="project" value="UniProtKB-KW"/>
</dbReference>
<dbReference type="GO" id="GO:0003723">
    <property type="term" value="F:RNA binding"/>
    <property type="evidence" value="ECO:0007669"/>
    <property type="project" value="UniProtKB-KW"/>
</dbReference>
<dbReference type="GO" id="GO:0051607">
    <property type="term" value="P:defense response to virus"/>
    <property type="evidence" value="ECO:0007669"/>
    <property type="project" value="UniProtKB-KW"/>
</dbReference>
<dbReference type="GO" id="GO:0043571">
    <property type="term" value="P:maintenance of CRISPR repeat elements"/>
    <property type="evidence" value="ECO:0007669"/>
    <property type="project" value="InterPro"/>
</dbReference>
<dbReference type="CDD" id="cd09739">
    <property type="entry name" value="Cas6_I-F"/>
    <property type="match status" value="1"/>
</dbReference>
<dbReference type="Gene3D" id="3.30.70.2540">
    <property type="entry name" value="CRISPR-associated endoribonuclease Cas6/Csy4"/>
    <property type="match status" value="1"/>
</dbReference>
<dbReference type="InterPro" id="IPR013396">
    <property type="entry name" value="CRISPR-assoc_prot_Csy4"/>
</dbReference>
<dbReference type="InterPro" id="IPR042564">
    <property type="entry name" value="CRISPR-Cas6/Csy4_sf"/>
</dbReference>
<dbReference type="NCBIfam" id="TIGR02563">
    <property type="entry name" value="cas_Csy4"/>
    <property type="match status" value="1"/>
</dbReference>
<dbReference type="Pfam" id="PF09618">
    <property type="entry name" value="Cas_Csy4"/>
    <property type="match status" value="1"/>
</dbReference>
<sequence length="184" mass="20459">MDHYIDIRVQPDPEFTASQLLNALFAKLHRVLGQLANGKIGISFPEVGKTLGECLRLHGTEDALSTLEKTSWLKGLRDYTQVSECKVVPNGVKFRTVRRVQLKSSAERLRRRSVSKGWLTAAEAAARIPDAVEKRSALPFVQIKSLSNGQMFFVFVEHGPLQNAPTAGRFSSYGLSTEATVPWF</sequence>
<proteinExistence type="evidence at protein level"/>
<gene>
    <name type="primary">cas6f</name>
    <name type="synonym">csy4</name>
    <name type="ordered locus">ECA3684</name>
</gene>